<keyword id="KW-0150">Chloroplast</keyword>
<keyword id="KW-0249">Electron transport</keyword>
<keyword id="KW-0472">Membrane</keyword>
<keyword id="KW-0602">Photosynthesis</keyword>
<keyword id="KW-0934">Plastid</keyword>
<keyword id="KW-0793">Thylakoid</keyword>
<keyword id="KW-0812">Transmembrane</keyword>
<keyword id="KW-1133">Transmembrane helix</keyword>
<keyword id="KW-0813">Transport</keyword>
<accession>Q20EX5</accession>
<evidence type="ECO:0000255" key="1">
    <source>
        <dbReference type="HAMAP-Rule" id="MF_00433"/>
    </source>
</evidence>
<gene>
    <name evidence="1" type="primary">petL</name>
</gene>
<protein>
    <recommendedName>
        <fullName evidence="1">Cytochrome b6-f complex subunit 6</fullName>
    </recommendedName>
    <alternativeName>
        <fullName evidence="1">Cytochrome b6-f complex subunit PetL</fullName>
    </alternativeName>
    <alternativeName>
        <fullName evidence="1">Cytochrome b6-f complex subunit VI</fullName>
    </alternativeName>
</protein>
<sequence length="31" mass="3301">MLTVIAYLGLLASVLIGTIVIYLGLVKVKLI</sequence>
<reference key="1">
    <citation type="journal article" date="2006" name="BMC Biol.">
        <title>The complete chloroplast DNA sequence of the green alga Oltmannsiellopsis viridis reveals a distinctive quadripartite architecture in the chloroplast genome of early diverging ulvophytes.</title>
        <authorList>
            <person name="Pombert J.-F."/>
            <person name="Lemieux C."/>
            <person name="Turmel M."/>
        </authorList>
    </citation>
    <scope>NUCLEOTIDE SEQUENCE [LARGE SCALE GENOMIC DNA]</scope>
</reference>
<geneLocation type="chloroplast"/>
<name>PETL_OLTVI</name>
<feature type="chain" id="PRO_0000275530" description="Cytochrome b6-f complex subunit 6">
    <location>
        <begin position="1"/>
        <end position="31"/>
    </location>
</feature>
<feature type="transmembrane region" description="Helical" evidence="1">
    <location>
        <begin position="4"/>
        <end position="24"/>
    </location>
</feature>
<comment type="function">
    <text evidence="1">Component of the cytochrome b6-f complex, which mediates electron transfer between photosystem II (PSII) and photosystem I (PSI), cyclic electron flow around PSI, and state transitions. PetL is important for photoautotrophic growth as well as for electron transfer efficiency and stability of the cytochrome b6-f complex.</text>
</comment>
<comment type="subunit">
    <text evidence="1">The 4 large subunits of the cytochrome b6-f complex are cytochrome b6, subunit IV (17 kDa polypeptide, PetD), cytochrome f and the Rieske protein, while the 4 small subunits are PetG, PetL, PetM and PetN. The complex functions as a dimer.</text>
</comment>
<comment type="subcellular location">
    <subcellularLocation>
        <location evidence="1">Plastid</location>
        <location evidence="1">Chloroplast thylakoid membrane</location>
        <topology evidence="1">Single-pass membrane protein</topology>
    </subcellularLocation>
</comment>
<comment type="similarity">
    <text evidence="1">Belongs to the PetL family.</text>
</comment>
<dbReference type="EMBL" id="DQ291132">
    <property type="protein sequence ID" value="ABB81938.1"/>
    <property type="molecule type" value="Genomic_DNA"/>
</dbReference>
<dbReference type="RefSeq" id="YP_635870.1">
    <property type="nucleotide sequence ID" value="NC_008099.1"/>
</dbReference>
<dbReference type="SMR" id="Q20EX5"/>
<dbReference type="GeneID" id="4100140"/>
<dbReference type="GO" id="GO:0009535">
    <property type="term" value="C:chloroplast thylakoid membrane"/>
    <property type="evidence" value="ECO:0007669"/>
    <property type="project" value="UniProtKB-SubCell"/>
</dbReference>
<dbReference type="GO" id="GO:0009512">
    <property type="term" value="C:cytochrome b6f complex"/>
    <property type="evidence" value="ECO:0007669"/>
    <property type="project" value="InterPro"/>
</dbReference>
<dbReference type="GO" id="GO:0045158">
    <property type="term" value="F:electron transporter, transferring electrons within cytochrome b6/f complex of photosystem II activity"/>
    <property type="evidence" value="ECO:0007669"/>
    <property type="project" value="UniProtKB-UniRule"/>
</dbReference>
<dbReference type="GO" id="GO:0015979">
    <property type="term" value="P:photosynthesis"/>
    <property type="evidence" value="ECO:0007669"/>
    <property type="project" value="UniProtKB-KW"/>
</dbReference>
<dbReference type="HAMAP" id="MF_00433">
    <property type="entry name" value="Cytb6_f_PetL"/>
    <property type="match status" value="1"/>
</dbReference>
<dbReference type="InterPro" id="IPR007802">
    <property type="entry name" value="Cyt_b6/f_cplx_su6"/>
</dbReference>
<dbReference type="SUPFAM" id="SSF103436">
    <property type="entry name" value="PetL subunit of the cytochrome b6f complex"/>
    <property type="match status" value="1"/>
</dbReference>
<organism>
    <name type="scientific">Oltmannsiellopsis viridis</name>
    <name type="common">Marine flagellate</name>
    <name type="synonym">Oltmannsiella viridis</name>
    <dbReference type="NCBI Taxonomy" id="51324"/>
    <lineage>
        <taxon>Eukaryota</taxon>
        <taxon>Viridiplantae</taxon>
        <taxon>Chlorophyta</taxon>
        <taxon>Ulvophyceae</taxon>
        <taxon>Oltmannsiellopsidales</taxon>
        <taxon>Oltmannsiellopsidaceae</taxon>
        <taxon>Oltmannsiellopsis</taxon>
    </lineage>
</organism>
<proteinExistence type="inferred from homology"/>